<organism>
    <name type="scientific">Caenorhabditis elegans</name>
    <dbReference type="NCBI Taxonomy" id="6239"/>
    <lineage>
        <taxon>Eukaryota</taxon>
        <taxon>Metazoa</taxon>
        <taxon>Ecdysozoa</taxon>
        <taxon>Nematoda</taxon>
        <taxon>Chromadorea</taxon>
        <taxon>Rhabditida</taxon>
        <taxon>Rhabditina</taxon>
        <taxon>Rhabditomorpha</taxon>
        <taxon>Rhabditoidea</taxon>
        <taxon>Rhabditidae</taxon>
        <taxon>Peloderinae</taxon>
        <taxon>Caenorhabditis</taxon>
    </lineage>
</organism>
<reference key="1">
    <citation type="journal article" date="1992" name="Neuron">
        <title>UNC-6, a laminin-related protein, guides cell and pioneer axon migrations in C. elegans.</title>
        <authorList>
            <person name="Ishii N."/>
            <person name="Wadsworth W.G."/>
            <person name="Stern B.D."/>
            <person name="Culotti J.G."/>
            <person name="Hedgecock E.M."/>
        </authorList>
    </citation>
    <scope>NUCLEOTIDE SEQUENCE [GENOMIC DNA]</scope>
    <source>
        <strain>Bristol N2</strain>
    </source>
</reference>
<reference key="2">
    <citation type="journal article" date="1998" name="Science">
        <title>Genome sequence of the nematode C. elegans: a platform for investigating biology.</title>
        <authorList>
            <consortium name="The C. elegans sequencing consortium"/>
        </authorList>
    </citation>
    <scope>NUCLEOTIDE SEQUENCE [LARGE SCALE GENOMIC DNA]</scope>
    <source>
        <strain>Bristol N2</strain>
    </source>
</reference>
<reference key="3">
    <citation type="journal article" date="1993" name="Nature">
        <title>Expression of the UNC-5 guidance receptor in the touch neurons of C. elegans steers their axons dorsally.</title>
        <authorList>
            <person name="Hamelin M."/>
            <person name="Zhou Y."/>
            <person name="Su M.-W."/>
            <person name="Scott I.M."/>
            <person name="Culotti J.G."/>
        </authorList>
    </citation>
    <scope>FUNCTION</scope>
    <scope>INTERACTION WITH UNC-5</scope>
</reference>
<reference key="4">
    <citation type="journal article" date="1996" name="Cell">
        <title>UNC-40, a C. elegans homolog of DCC (Deleted in Colorectal Cancer), is required in motile cells responding to UNC-6 netrin cues.</title>
        <authorList>
            <person name="Chan S.S.-Y."/>
            <person name="Zheng H."/>
            <person name="Su M.-W."/>
            <person name="Wilk R."/>
            <person name="Killeen M.T."/>
            <person name="Hedgecock E.M."/>
            <person name="Culotti J.G."/>
        </authorList>
    </citation>
    <scope>FUNCTION</scope>
    <scope>INTERACTION WITH UNC-40</scope>
</reference>
<reference key="5">
    <citation type="journal article" date="1998" name="Dev. Biol.">
        <title>Suppressors of ectopic UNC-5 growth cone steering identify eight genes involved in axon guidance in Caenorhabditis elegans.</title>
        <authorList>
            <person name="Colavita A."/>
            <person name="Culotti J.G."/>
        </authorList>
    </citation>
    <scope>FUNCTION</scope>
    <scope>MUTAGENESIS OF 99-GLN--TYR-612</scope>
</reference>
<reference key="6">
    <citation type="journal article" date="2007" name="Dev. Biol.">
        <title>C. elegans seu-1 encodes novel nuclear proteins that regulate responses to UNC-6/netrin guidance cues.</title>
        <authorList>
            <person name="Zheng H."/>
            <person name="Coudiere L."/>
            <person name="Camia C."/>
            <person name="Colavita A."/>
            <person name="Culotti J.G."/>
            <person name="Merz D.C."/>
        </authorList>
    </citation>
    <scope>FUNCTION</scope>
    <scope>MUTAGENESIS OF 99-GLN--TYR-612</scope>
</reference>
<reference key="7">
    <citation type="journal article" date="2012" name="Dev. Biol.">
        <title>mig-38, a novel gene that regulates distal tip cell turning during gonadogenesis in C. elegans hermaphrodites.</title>
        <authorList>
            <person name="Martynovsky M."/>
            <person name="Wong M.C."/>
            <person name="Byrd D.T."/>
            <person name="Kimble J."/>
            <person name="Schwarzbauer J.E."/>
        </authorList>
    </citation>
    <scope>FUNCTION</scope>
    <scope>DISRUPTION PHENOTYPE</scope>
</reference>
<reference evidence="15" key="8">
    <citation type="journal article" date="2012" name="Nat. Neurosci.">
        <title>Netrin (UNC-6) mediates dendritic self-avoidance.</title>
        <authorList>
            <person name="Smith C.J."/>
            <person name="Watson J.D."/>
            <person name="VanHoven M.K."/>
            <person name="Colon-Ramos D.A."/>
            <person name="Miller D.M. III"/>
        </authorList>
    </citation>
    <scope>FUNCTION</scope>
    <scope>INTERACTION WITH UNC-40</scope>
</reference>
<reference key="9">
    <citation type="journal article" date="2013" name="Development">
        <title>C. elegans PVF-1 inhibits permissive UNC-40 signalling through CED-10 GTPase to position the male ray 1 sensillum.</title>
        <authorList>
            <person name="Dalpe G."/>
            <person name="Tarsitano M."/>
            <person name="Persico M.G."/>
            <person name="Zheng H."/>
            <person name="Culotti J."/>
        </authorList>
    </citation>
    <scope>FUNCTION</scope>
</reference>
<reference key="10">
    <citation type="journal article" date="2017" name="Nat. Neurosci.">
        <title>Glia initiate brain assembly through noncanonical Chimaerin-Furin axon guidance in C. elegans.</title>
        <authorList>
            <person name="Rapti G."/>
            <person name="Li C."/>
            <person name="Shan A."/>
            <person name="Lu Y."/>
            <person name="Shaham S."/>
        </authorList>
    </citation>
    <scope>FUNCTION</scope>
    <scope>MUTAGENESIS OF ARG-30; 99-GLN--TYR-612; ARG-307 AND LYS-598</scope>
</reference>
<reference key="11">
    <citation type="journal article" date="2018" name="PLoS Genet.">
        <title>The receptor protein tyrosine phosphatase CLR-1 is required for synaptic partner recognition.</title>
        <authorList>
            <person name="Varshney A."/>
            <person name="Benedetti K."/>
            <person name="Watters K."/>
            <person name="Shankar R."/>
            <person name="Tatarakis D."/>
            <person name="Coto Villa D."/>
            <person name="Magallanes K."/>
            <person name="Agenor V."/>
            <person name="Wung W."/>
            <person name="Farah F."/>
            <person name="Ali N."/>
            <person name="Le N."/>
            <person name="Pyle J."/>
            <person name="Farooqi A."/>
            <person name="Kieu Z."/>
            <person name="Bremer M."/>
            <person name="VanHoven M."/>
        </authorList>
    </citation>
    <scope>FUNCTION</scope>
    <scope>MUTAGENESIS OF 99-GLN--TYR-612</scope>
</reference>
<comment type="function">
    <text evidence="6 7 8 9 10 11 12 13 14">Component of an extracellular matrix cue that guides dorsoventral migrations on the epidermis (PubMed:8861903). Required for the guidance of pioneer axons and migrating cells along the body wall (PubMed:28846083, PubMed:8332188). In particular, it is required for the guidance of axons from neurons, including SubL neurons and AIY interneurons, into the nerve ring (PubMed:28846083, PubMed:9473333). During gonad morphogenesis, involved in distal tip cell (DTC) migration from the dorsal side of the hermaphrodite body to the midbody to allow for formation of gonad arms (PubMed:17716643, PubMed:22732572). Its association with either unc-40 or unc-5 receptors will lead to axon attraction or repulsion, respectively (PubMed:8332188, PubMed:8861903, PubMed:9473333). Involved in dendritic morphogenesis; may act by association with unc-40 at the tips of growing dendrites for interaction with unc-5 on the apposing branch to induce mutual repulsion (PubMed:22426253). Involved in the positioning of ray 1, the most anterior ray sensilium, in the male tail (PubMed:24004945). Required for the formation of synapses between the AVA interneurons and the PHB sensory neurons (PubMed:29742100).</text>
</comment>
<comment type="subunit">
    <text evidence="7 13">Binds to unc-5 and unc-40 receptors.</text>
</comment>
<comment type="subcellular location">
    <subcellularLocation>
        <location>Secreted</location>
        <location>Extracellular space</location>
        <location>Extracellular matrix</location>
        <location>Basement membrane</location>
    </subcellularLocation>
    <text>Epidermal basal lamina.</text>
</comment>
<comment type="domain">
    <text>Mutations that delete the second laminin EGF-like repeat impair only dorsal migrations of mesodermal cells and axons.</text>
</comment>
<comment type="disruption phenotype">
    <text evidence="8">Defective gonad distal tip cell (DTC) migration whereby DTCs migrate towards the midbody of the hermaphrodite on the ventral side rather than the dorsal side of the body resulting in ventrally located gonad arms. Double knockout with mig-38 RNAi results in failed gonad DTC migration to the midbody of the hermaphrodite.</text>
</comment>
<name>UNC6_CAEEL</name>
<keyword id="KW-0002">3D-structure</keyword>
<keyword id="KW-0084">Basement membrane</keyword>
<keyword id="KW-1015">Disulfide bond</keyword>
<keyword id="KW-0272">Extracellular matrix</keyword>
<keyword id="KW-0325">Glycoprotein</keyword>
<keyword id="KW-0424">Laminin EGF-like domain</keyword>
<keyword id="KW-0524">Neurogenesis</keyword>
<keyword id="KW-1185">Reference proteome</keyword>
<keyword id="KW-0677">Repeat</keyword>
<keyword id="KW-0964">Secreted</keyword>
<keyword id="KW-0732">Signal</keyword>
<feature type="signal peptide" evidence="2">
    <location>
        <begin position="1"/>
        <end position="21"/>
    </location>
</feature>
<feature type="chain" id="PRO_0000017090" description="Netrin unc-6">
    <location>
        <begin position="22"/>
        <end position="612"/>
    </location>
</feature>
<feature type="domain" description="Laminin N-terminal" evidence="5">
    <location>
        <begin position="43"/>
        <end position="290"/>
    </location>
</feature>
<feature type="domain" description="Laminin EGF-like 1" evidence="4">
    <location>
        <begin position="291"/>
        <end position="346"/>
    </location>
</feature>
<feature type="domain" description="Laminin EGF-like 2" evidence="4">
    <location>
        <begin position="347"/>
        <end position="409"/>
    </location>
</feature>
<feature type="domain" description="Laminin EGF-like 3" evidence="4">
    <location>
        <begin position="410"/>
        <end position="459"/>
    </location>
</feature>
<feature type="domain" description="NTR" evidence="3">
    <location>
        <begin position="478"/>
        <end position="604"/>
    </location>
</feature>
<feature type="glycosylation site" description="N-linked (GlcNAc...) asparagine" evidence="2">
    <location>
        <position position="114"/>
    </location>
</feature>
<feature type="glycosylation site" description="N-linked (GlcNAc...) asparagine" evidence="2">
    <location>
        <position position="128"/>
    </location>
</feature>
<feature type="glycosylation site" description="N-linked (GlcNAc...) asparagine" evidence="2">
    <location>
        <position position="268"/>
    </location>
</feature>
<feature type="glycosylation site" description="N-linked (GlcNAc...) asparagine" evidence="2">
    <location>
        <position position="368"/>
    </location>
</feature>
<feature type="glycosylation site" description="N-linked (GlcNAc...) asparagine" evidence="2">
    <location>
        <position position="423"/>
    </location>
</feature>
<feature type="glycosylation site" description="N-linked (GlcNAc...) asparagine" evidence="2">
    <location>
        <position position="564"/>
    </location>
</feature>
<feature type="disulfide bond" evidence="1">
    <location>
        <begin position="117"/>
        <end position="149"/>
    </location>
</feature>
<feature type="disulfide bond" evidence="1">
    <location>
        <begin position="291"/>
        <end position="300"/>
    </location>
</feature>
<feature type="disulfide bond" evidence="1">
    <location>
        <begin position="293"/>
        <end position="310"/>
    </location>
</feature>
<feature type="disulfide bond" evidence="1">
    <location>
        <begin position="312"/>
        <end position="321"/>
    </location>
</feature>
<feature type="disulfide bond" evidence="1">
    <location>
        <begin position="324"/>
        <end position="344"/>
    </location>
</feature>
<feature type="disulfide bond" evidence="1">
    <location>
        <begin position="347"/>
        <end position="356"/>
    </location>
</feature>
<feature type="disulfide bond" evidence="1">
    <location>
        <begin position="349"/>
        <end position="374"/>
    </location>
</feature>
<feature type="disulfide bond" evidence="1">
    <location>
        <begin position="377"/>
        <end position="386"/>
    </location>
</feature>
<feature type="disulfide bond" evidence="1">
    <location>
        <begin position="389"/>
        <end position="407"/>
    </location>
</feature>
<feature type="disulfide bond" evidence="1">
    <location>
        <begin position="410"/>
        <end position="422"/>
    </location>
</feature>
<feature type="disulfide bond" evidence="1">
    <location>
        <begin position="412"/>
        <end position="429"/>
    </location>
</feature>
<feature type="disulfide bond" evidence="1">
    <location>
        <begin position="431"/>
        <end position="440"/>
    </location>
</feature>
<feature type="disulfide bond" evidence="1">
    <location>
        <begin position="443"/>
        <end position="457"/>
    </location>
</feature>
<feature type="disulfide bond" evidence="1">
    <location>
        <begin position="478"/>
        <end position="547"/>
    </location>
</feature>
<feature type="disulfide bond" evidence="1">
    <location>
        <begin position="494"/>
        <end position="604"/>
    </location>
</feature>
<feature type="mutagenesis site" description="Partially rescues the AIY axon guidance defects of the unc-6 ev400 mutant." evidence="10">
    <location>
        <position position="30"/>
    </location>
</feature>
<feature type="mutagenesis site" description="In ev400; reduces synapse formation between the PHB and AVA neurons. Defective guidance of the AIY axon into the nerve ring, which impairs nerve ring assembly. Anterior touch neuron axons fail to extend in a dorsal direction. The axons of DA and DB motorneurons do not grow to their targets in the dorsal cord and instead extend along subdorsal longitudinal paths. Distal tip cell migration defects. The distal tip cell migration defects are enhanced in seu-1 ev520 or seu-1 ev529 mutants." evidence="6 10 11 14">
    <location>
        <begin position="99"/>
        <end position="612"/>
    </location>
</feature>
<feature type="mutagenesis site" description="Partially rescues the AIY axon guidance defects of the unc-6 ev400 mutant." evidence="10">
    <location>
        <position position="307"/>
    </location>
</feature>
<feature type="mutagenesis site" description="Does not rescue the AIY axon guidance defects of the unc-6 ev400 mutant." evidence="10">
    <location>
        <position position="598"/>
    </location>
</feature>
<accession>P34710</accession>
<evidence type="ECO:0000250" key="1"/>
<evidence type="ECO:0000255" key="2"/>
<evidence type="ECO:0000255" key="3">
    <source>
        <dbReference type="PROSITE-ProRule" id="PRU00295"/>
    </source>
</evidence>
<evidence type="ECO:0000255" key="4">
    <source>
        <dbReference type="PROSITE-ProRule" id="PRU00460"/>
    </source>
</evidence>
<evidence type="ECO:0000255" key="5">
    <source>
        <dbReference type="PROSITE-ProRule" id="PRU00466"/>
    </source>
</evidence>
<evidence type="ECO:0000269" key="6">
    <source>
    </source>
</evidence>
<evidence type="ECO:0000269" key="7">
    <source>
    </source>
</evidence>
<evidence type="ECO:0000269" key="8">
    <source>
    </source>
</evidence>
<evidence type="ECO:0000269" key="9">
    <source>
    </source>
</evidence>
<evidence type="ECO:0000269" key="10">
    <source>
    </source>
</evidence>
<evidence type="ECO:0000269" key="11">
    <source>
    </source>
</evidence>
<evidence type="ECO:0000269" key="12">
    <source>
    </source>
</evidence>
<evidence type="ECO:0000269" key="13">
    <source>
    </source>
</evidence>
<evidence type="ECO:0000269" key="14">
    <source>
    </source>
</evidence>
<evidence type="ECO:0000305" key="15"/>
<evidence type="ECO:0000312" key="16">
    <source>
        <dbReference type="WormBase" id="F41C6.1"/>
    </source>
</evidence>
<proteinExistence type="evidence at protein level"/>
<dbReference type="EMBL" id="M80241">
    <property type="protein sequence ID" value="AAA28157.1"/>
    <property type="molecule type" value="Genomic_DNA"/>
</dbReference>
<dbReference type="EMBL" id="BX284606">
    <property type="protein sequence ID" value="CCD67895.1"/>
    <property type="molecule type" value="Genomic_DNA"/>
</dbReference>
<dbReference type="PIR" id="JH0799">
    <property type="entry name" value="JH0799"/>
</dbReference>
<dbReference type="RefSeq" id="NP_509165.1">
    <property type="nucleotide sequence ID" value="NM_076764.5"/>
</dbReference>
<dbReference type="PDB" id="8EDK">
    <property type="method" value="X-ray"/>
    <property type="resolution" value="2.50 A"/>
    <property type="chains" value="A=22-461"/>
</dbReference>
<dbReference type="PDBsum" id="8EDK"/>
<dbReference type="SASBDB" id="P34710"/>
<dbReference type="SMR" id="P34710"/>
<dbReference type="BioGRID" id="45889">
    <property type="interactions" value="4"/>
</dbReference>
<dbReference type="DIP" id="DIP-24693N"/>
<dbReference type="FunCoup" id="P34710">
    <property type="interactions" value="215"/>
</dbReference>
<dbReference type="STRING" id="6239.F41C6.1.1"/>
<dbReference type="GlyCosmos" id="P34710">
    <property type="glycosylation" value="6 sites, No reported glycans"/>
</dbReference>
<dbReference type="PaxDb" id="6239-F41C6.1.1"/>
<dbReference type="PeptideAtlas" id="P34710"/>
<dbReference type="EnsemblMetazoa" id="F41C6.1.1">
    <property type="protein sequence ID" value="F41C6.1.1"/>
    <property type="gene ID" value="WBGene00006746"/>
</dbReference>
<dbReference type="EnsemblMetazoa" id="F41C6.1.2">
    <property type="protein sequence ID" value="F41C6.1.2"/>
    <property type="gene ID" value="WBGene00006746"/>
</dbReference>
<dbReference type="GeneID" id="180961"/>
<dbReference type="KEGG" id="cel:CELE_F41C6.1"/>
<dbReference type="UCSC" id="F41C6.1.1">
    <property type="organism name" value="c. elegans"/>
</dbReference>
<dbReference type="AGR" id="WB:WBGene00006746"/>
<dbReference type="CTD" id="180961"/>
<dbReference type="WormBase" id="F41C6.1">
    <property type="protein sequence ID" value="CE04538"/>
    <property type="gene ID" value="WBGene00006746"/>
    <property type="gene designation" value="unc-6"/>
</dbReference>
<dbReference type="eggNOG" id="KOG3512">
    <property type="taxonomic scope" value="Eukaryota"/>
</dbReference>
<dbReference type="GeneTree" id="ENSGT00940000153882"/>
<dbReference type="HOGENOM" id="CLU_018213_2_0_1"/>
<dbReference type="InParanoid" id="P34710"/>
<dbReference type="OMA" id="FSQFSMR"/>
<dbReference type="OrthoDB" id="9972745at2759"/>
<dbReference type="PhylomeDB" id="P34710"/>
<dbReference type="PRO" id="PR:P34710"/>
<dbReference type="Proteomes" id="UP000001940">
    <property type="component" value="Chromosome X"/>
</dbReference>
<dbReference type="Bgee" id="WBGene00006746">
    <property type="expression patterns" value="Expressed in hermaphroditic organism and 18 other cell types or tissues"/>
</dbReference>
<dbReference type="GO" id="GO:0030424">
    <property type="term" value="C:axon"/>
    <property type="evidence" value="ECO:0000314"/>
    <property type="project" value="WormBase"/>
</dbReference>
<dbReference type="GO" id="GO:0005604">
    <property type="term" value="C:basement membrane"/>
    <property type="evidence" value="ECO:0000314"/>
    <property type="project" value="WormBase"/>
</dbReference>
<dbReference type="GO" id="GO:0005737">
    <property type="term" value="C:cytoplasm"/>
    <property type="evidence" value="ECO:0000314"/>
    <property type="project" value="WormBase"/>
</dbReference>
<dbReference type="GO" id="GO:0005576">
    <property type="term" value="C:extracellular region"/>
    <property type="evidence" value="ECO:0000304"/>
    <property type="project" value="Reactome"/>
</dbReference>
<dbReference type="GO" id="GO:0005102">
    <property type="term" value="F:signaling receptor binding"/>
    <property type="evidence" value="ECO:0000250"/>
    <property type="project" value="WormBase"/>
</dbReference>
<dbReference type="GO" id="GO:0009887">
    <property type="term" value="P:animal organ morphogenesis"/>
    <property type="evidence" value="ECO:0000318"/>
    <property type="project" value="GO_Central"/>
</dbReference>
<dbReference type="GO" id="GO:0007411">
    <property type="term" value="P:axon guidance"/>
    <property type="evidence" value="ECO:0000315"/>
    <property type="project" value="WormBase"/>
</dbReference>
<dbReference type="GO" id="GO:0016358">
    <property type="term" value="P:dendrite development"/>
    <property type="evidence" value="ECO:0000318"/>
    <property type="project" value="GO_Central"/>
</dbReference>
<dbReference type="GO" id="GO:0048813">
    <property type="term" value="P:dendrite morphogenesis"/>
    <property type="evidence" value="ECO:0000315"/>
    <property type="project" value="UniProtKB"/>
</dbReference>
<dbReference type="GO" id="GO:0033563">
    <property type="term" value="P:dorsal/ventral axon guidance"/>
    <property type="evidence" value="ECO:0000315"/>
    <property type="project" value="UniProtKB"/>
</dbReference>
<dbReference type="GO" id="GO:0030950">
    <property type="term" value="P:establishment or maintenance of actin cytoskeleton polarity"/>
    <property type="evidence" value="ECO:0000315"/>
    <property type="project" value="UniProtKB"/>
</dbReference>
<dbReference type="GO" id="GO:0035262">
    <property type="term" value="P:gonad morphogenesis"/>
    <property type="evidence" value="ECO:0000315"/>
    <property type="project" value="UniProtKB"/>
</dbReference>
<dbReference type="GO" id="GO:0097376">
    <property type="term" value="P:interneuron axon guidance"/>
    <property type="evidence" value="ECO:0000315"/>
    <property type="project" value="UniProtKB"/>
</dbReference>
<dbReference type="GO" id="GO:0008078">
    <property type="term" value="P:mesodermal cell migration"/>
    <property type="evidence" value="ECO:0000315"/>
    <property type="project" value="WormBase"/>
</dbReference>
<dbReference type="GO" id="GO:0008045">
    <property type="term" value="P:motor neuron axon guidance"/>
    <property type="evidence" value="ECO:0000315"/>
    <property type="project" value="UniProtKB"/>
</dbReference>
<dbReference type="GO" id="GO:0031115">
    <property type="term" value="P:negative regulation of microtubule polymerization"/>
    <property type="evidence" value="ECO:0000315"/>
    <property type="project" value="UniProtKB"/>
</dbReference>
<dbReference type="GO" id="GO:0045138">
    <property type="term" value="P:nematode male tail tip morphogenesis"/>
    <property type="evidence" value="ECO:0000315"/>
    <property type="project" value="WormBase"/>
</dbReference>
<dbReference type="GO" id="GO:0038007">
    <property type="term" value="P:netrin-activated signaling pathway"/>
    <property type="evidence" value="ECO:0000315"/>
    <property type="project" value="UniProtKB"/>
</dbReference>
<dbReference type="GO" id="GO:0031175">
    <property type="term" value="P:neuron projection development"/>
    <property type="evidence" value="ECO:0000315"/>
    <property type="project" value="WormBase"/>
</dbReference>
<dbReference type="GO" id="GO:1905488">
    <property type="term" value="P:positive regulation of anterior/posterior axon guidance"/>
    <property type="evidence" value="ECO:0000315"/>
    <property type="project" value="UniProtKB"/>
</dbReference>
<dbReference type="GO" id="GO:0040017">
    <property type="term" value="P:positive regulation of locomotion"/>
    <property type="evidence" value="ECO:0000315"/>
    <property type="project" value="UniProtKB"/>
</dbReference>
<dbReference type="GO" id="GO:0051965">
    <property type="term" value="P:positive regulation of synapse assembly"/>
    <property type="evidence" value="ECO:0000315"/>
    <property type="project" value="UniProtKB"/>
</dbReference>
<dbReference type="GO" id="GO:0030334">
    <property type="term" value="P:regulation of cell migration"/>
    <property type="evidence" value="ECO:0000315"/>
    <property type="project" value="WormBase"/>
</dbReference>
<dbReference type="GO" id="GO:1905815">
    <property type="term" value="P:regulation of dorsal/ventral axon guidance"/>
    <property type="evidence" value="ECO:0000315"/>
    <property type="project" value="UniProtKB"/>
</dbReference>
<dbReference type="GO" id="GO:1905812">
    <property type="term" value="P:regulation of motor neuron axon guidance"/>
    <property type="evidence" value="ECO:0000316"/>
    <property type="project" value="UniProtKB"/>
</dbReference>
<dbReference type="GO" id="GO:1905489">
    <property type="term" value="P:regulation of sensory neuron axon guidance"/>
    <property type="evidence" value="ECO:0000316"/>
    <property type="project" value="UniProtKB"/>
</dbReference>
<dbReference type="GO" id="GO:0097374">
    <property type="term" value="P:sensory neuron axon guidance"/>
    <property type="evidence" value="ECO:0000315"/>
    <property type="project" value="UniProtKB"/>
</dbReference>
<dbReference type="GO" id="GO:0009888">
    <property type="term" value="P:tissue development"/>
    <property type="evidence" value="ECO:0000318"/>
    <property type="project" value="GO_Central"/>
</dbReference>
<dbReference type="GO" id="GO:0007419">
    <property type="term" value="P:ventral cord development"/>
    <property type="evidence" value="ECO:0000315"/>
    <property type="project" value="UniProtKB"/>
</dbReference>
<dbReference type="CDD" id="cd00055">
    <property type="entry name" value="EGF_Lam"/>
    <property type="match status" value="3"/>
</dbReference>
<dbReference type="CDD" id="cd03579">
    <property type="entry name" value="NTR_netrin-1_like"/>
    <property type="match status" value="1"/>
</dbReference>
<dbReference type="FunFam" id="2.10.25.10:FF:000081">
    <property type="entry name" value="Netrin 1"/>
    <property type="match status" value="1"/>
</dbReference>
<dbReference type="FunFam" id="2.10.25.10:FF:000048">
    <property type="entry name" value="Netrin 3"/>
    <property type="match status" value="1"/>
</dbReference>
<dbReference type="FunFam" id="2.40.50.120:FF:000025">
    <property type="entry name" value="Netrin unc-6"/>
    <property type="match status" value="1"/>
</dbReference>
<dbReference type="FunFam" id="2.60.120.260:FF:000098">
    <property type="entry name" value="Netrin-A, isoform B"/>
    <property type="match status" value="1"/>
</dbReference>
<dbReference type="Gene3D" id="2.40.50.120">
    <property type="match status" value="1"/>
</dbReference>
<dbReference type="Gene3D" id="2.60.120.260">
    <property type="entry name" value="Galactose-binding domain-like"/>
    <property type="match status" value="1"/>
</dbReference>
<dbReference type="Gene3D" id="2.10.25.10">
    <property type="entry name" value="Laminin"/>
    <property type="match status" value="2"/>
</dbReference>
<dbReference type="InterPro" id="IPR000742">
    <property type="entry name" value="EGF-like_dom"/>
</dbReference>
<dbReference type="InterPro" id="IPR050440">
    <property type="entry name" value="Laminin/Netrin_ECM"/>
</dbReference>
<dbReference type="InterPro" id="IPR008211">
    <property type="entry name" value="Laminin_N"/>
</dbReference>
<dbReference type="InterPro" id="IPR002049">
    <property type="entry name" value="LE_dom"/>
</dbReference>
<dbReference type="InterPro" id="IPR056863">
    <property type="entry name" value="LMN_ATRN_NET-like_EGF"/>
</dbReference>
<dbReference type="InterPro" id="IPR001134">
    <property type="entry name" value="Netrin_domain"/>
</dbReference>
<dbReference type="InterPro" id="IPR018933">
    <property type="entry name" value="Netrin_module_non-TIMP"/>
</dbReference>
<dbReference type="InterPro" id="IPR008993">
    <property type="entry name" value="TIMP-like_OB-fold"/>
</dbReference>
<dbReference type="PANTHER" id="PTHR10574:SF365">
    <property type="entry name" value="NETRIN-A-RELATED"/>
    <property type="match status" value="1"/>
</dbReference>
<dbReference type="PANTHER" id="PTHR10574">
    <property type="entry name" value="NETRIN/LAMININ-RELATED"/>
    <property type="match status" value="1"/>
</dbReference>
<dbReference type="Pfam" id="PF00053">
    <property type="entry name" value="EGF_laminin"/>
    <property type="match status" value="2"/>
</dbReference>
<dbReference type="Pfam" id="PF24973">
    <property type="entry name" value="EGF_LMN_ATRN"/>
    <property type="match status" value="1"/>
</dbReference>
<dbReference type="Pfam" id="PF00055">
    <property type="entry name" value="Laminin_N"/>
    <property type="match status" value="1"/>
</dbReference>
<dbReference type="Pfam" id="PF01759">
    <property type="entry name" value="NTR"/>
    <property type="match status" value="1"/>
</dbReference>
<dbReference type="SMART" id="SM00643">
    <property type="entry name" value="C345C"/>
    <property type="match status" value="1"/>
</dbReference>
<dbReference type="SMART" id="SM00180">
    <property type="entry name" value="EGF_Lam"/>
    <property type="match status" value="3"/>
</dbReference>
<dbReference type="SMART" id="SM00136">
    <property type="entry name" value="LamNT"/>
    <property type="match status" value="1"/>
</dbReference>
<dbReference type="SUPFAM" id="SSF57196">
    <property type="entry name" value="EGF/Laminin"/>
    <property type="match status" value="2"/>
</dbReference>
<dbReference type="SUPFAM" id="SSF50242">
    <property type="entry name" value="TIMP-like"/>
    <property type="match status" value="1"/>
</dbReference>
<dbReference type="PROSITE" id="PS00022">
    <property type="entry name" value="EGF_1"/>
    <property type="match status" value="2"/>
</dbReference>
<dbReference type="PROSITE" id="PS01248">
    <property type="entry name" value="EGF_LAM_1"/>
    <property type="match status" value="3"/>
</dbReference>
<dbReference type="PROSITE" id="PS50027">
    <property type="entry name" value="EGF_LAM_2"/>
    <property type="match status" value="3"/>
</dbReference>
<dbReference type="PROSITE" id="PS51117">
    <property type="entry name" value="LAMININ_NTER"/>
    <property type="match status" value="1"/>
</dbReference>
<dbReference type="PROSITE" id="PS50189">
    <property type="entry name" value="NTR"/>
    <property type="match status" value="1"/>
</dbReference>
<gene>
    <name evidence="16" type="primary">unc-6</name>
    <name evidence="16" type="synonym">unc-106</name>
    <name evidence="16" type="ORF">F41C6.1</name>
</gene>
<sequence>MITSVLRYVLALYFCMGIAHGAYFSQFSMRAPDHDPCHDHTGRPVRCVPEFINAAFGKPVIASDTCGTNRPDKYCTVKEGPDGIIREQCDTCDARNHFQSHPASLLTDLNSIGNMTCWVSTPSLSPQNVSLTLSLGKKFELTYVSMHFCSRLPDSMALYKSADFGKTWTPFQFYSSECRRIFGRDPDVSITKSNEQEAVCTASHIMGPGGNRVAFPFLENRPSAQNFENSPVLQDWVTATDIKVVFSRLSPDQAELYGLSNDVNSYGNETDDEVKQRYFYSMGELAVGGRCKCNGHASRCIFDKMGRYTCDCKHNTAGTECEMCKPFHYDRPWGRATANSANSCVACNCNQHAKRCRFDAELFRLSGNRSGGVCLNCRHNTAGRNCHLCKPGFVRDTSLPMTHRKACKSCGCHPVGSLGKSCNQSSGQCVCKPGVTGTTCNRCAKGYQQSRSTVTPCIKIPTKADFIGSSHSEEQDQCSKCRIVPKRLNQKKFCKRDHAVQMVVVSREMVDGWAKYKIVVESVFKRGTENMQRGETSLWISPQGVICKCPKLRVGRRYLLLGKNDSDHERDGLMVNPQTVLVEWEDDIMDKVLRFSKKDKLGQCPEITSHRY</sequence>
<protein>
    <recommendedName>
        <fullName>Netrin unc-6</fullName>
    </recommendedName>
    <alternativeName>
        <fullName>Uncoordinated protein 6</fullName>
    </alternativeName>
</protein>